<organism>
    <name type="scientific">Listeria monocytogenes serotype 4b (strain CLIP80459)</name>
    <dbReference type="NCBI Taxonomy" id="568819"/>
    <lineage>
        <taxon>Bacteria</taxon>
        <taxon>Bacillati</taxon>
        <taxon>Bacillota</taxon>
        <taxon>Bacilli</taxon>
        <taxon>Bacillales</taxon>
        <taxon>Listeriaceae</taxon>
        <taxon>Listeria</taxon>
    </lineage>
</organism>
<feature type="chain" id="PRO_1000205862" description="Glycerol-3-phosphate dehydrogenase [NAD(P)+]">
    <location>
        <begin position="1"/>
        <end position="338"/>
    </location>
</feature>
<feature type="active site" description="Proton acceptor" evidence="1">
    <location>
        <position position="194"/>
    </location>
</feature>
<feature type="binding site" evidence="1">
    <location>
        <position position="13"/>
    </location>
    <ligand>
        <name>NADPH</name>
        <dbReference type="ChEBI" id="CHEBI:57783"/>
    </ligand>
</feature>
<feature type="binding site" evidence="1">
    <location>
        <position position="14"/>
    </location>
    <ligand>
        <name>NADPH</name>
        <dbReference type="ChEBI" id="CHEBI:57783"/>
    </ligand>
</feature>
<feature type="binding site" evidence="1">
    <location>
        <position position="108"/>
    </location>
    <ligand>
        <name>NADPH</name>
        <dbReference type="ChEBI" id="CHEBI:57783"/>
    </ligand>
</feature>
<feature type="binding site" evidence="1">
    <location>
        <position position="108"/>
    </location>
    <ligand>
        <name>sn-glycerol 3-phosphate</name>
        <dbReference type="ChEBI" id="CHEBI:57597"/>
    </ligand>
</feature>
<feature type="binding site" evidence="1">
    <location>
        <position position="139"/>
    </location>
    <ligand>
        <name>sn-glycerol 3-phosphate</name>
        <dbReference type="ChEBI" id="CHEBI:57597"/>
    </ligand>
</feature>
<feature type="binding site" evidence="1">
    <location>
        <position position="141"/>
    </location>
    <ligand>
        <name>sn-glycerol 3-phosphate</name>
        <dbReference type="ChEBI" id="CHEBI:57597"/>
    </ligand>
</feature>
<feature type="binding site" evidence="1">
    <location>
        <position position="143"/>
    </location>
    <ligand>
        <name>NADPH</name>
        <dbReference type="ChEBI" id="CHEBI:57783"/>
    </ligand>
</feature>
<feature type="binding site" evidence="1">
    <location>
        <position position="194"/>
    </location>
    <ligand>
        <name>sn-glycerol 3-phosphate</name>
        <dbReference type="ChEBI" id="CHEBI:57597"/>
    </ligand>
</feature>
<feature type="binding site" evidence="1">
    <location>
        <position position="247"/>
    </location>
    <ligand>
        <name>sn-glycerol 3-phosphate</name>
        <dbReference type="ChEBI" id="CHEBI:57597"/>
    </ligand>
</feature>
<feature type="binding site" evidence="1">
    <location>
        <position position="257"/>
    </location>
    <ligand>
        <name>sn-glycerol 3-phosphate</name>
        <dbReference type="ChEBI" id="CHEBI:57597"/>
    </ligand>
</feature>
<feature type="binding site" evidence="1">
    <location>
        <position position="258"/>
    </location>
    <ligand>
        <name>NADPH</name>
        <dbReference type="ChEBI" id="CHEBI:57783"/>
    </ligand>
</feature>
<feature type="binding site" evidence="1">
    <location>
        <position position="258"/>
    </location>
    <ligand>
        <name>sn-glycerol 3-phosphate</name>
        <dbReference type="ChEBI" id="CHEBI:57597"/>
    </ligand>
</feature>
<feature type="binding site" evidence="1">
    <location>
        <position position="259"/>
    </location>
    <ligand>
        <name>sn-glycerol 3-phosphate</name>
        <dbReference type="ChEBI" id="CHEBI:57597"/>
    </ligand>
</feature>
<feature type="binding site" evidence="1">
    <location>
        <position position="282"/>
    </location>
    <ligand>
        <name>NADPH</name>
        <dbReference type="ChEBI" id="CHEBI:57783"/>
    </ligand>
</feature>
<feature type="binding site" evidence="1">
    <location>
        <position position="284"/>
    </location>
    <ligand>
        <name>NADPH</name>
        <dbReference type="ChEBI" id="CHEBI:57783"/>
    </ligand>
</feature>
<evidence type="ECO:0000255" key="1">
    <source>
        <dbReference type="HAMAP-Rule" id="MF_00394"/>
    </source>
</evidence>
<accession>C1KWN6</accession>
<reference key="1">
    <citation type="journal article" date="2012" name="BMC Genomics">
        <title>Comparative genomics and transcriptomics of lineages I, II, and III strains of Listeria monocytogenes.</title>
        <authorList>
            <person name="Hain T."/>
            <person name="Ghai R."/>
            <person name="Billion A."/>
            <person name="Kuenne C.T."/>
            <person name="Steinweg C."/>
            <person name="Izar B."/>
            <person name="Mohamed W."/>
            <person name="Mraheil M."/>
            <person name="Domann E."/>
            <person name="Schaffrath S."/>
            <person name="Karst U."/>
            <person name="Goesmann A."/>
            <person name="Oehm S."/>
            <person name="Puhler A."/>
            <person name="Merkl R."/>
            <person name="Vorwerk S."/>
            <person name="Glaser P."/>
            <person name="Garrido P."/>
            <person name="Rusniok C."/>
            <person name="Buchrieser C."/>
            <person name="Goebel W."/>
            <person name="Chakraborty T."/>
        </authorList>
    </citation>
    <scope>NUCLEOTIDE SEQUENCE [LARGE SCALE GENOMIC DNA]</scope>
    <source>
        <strain>CLIP80459</strain>
    </source>
</reference>
<gene>
    <name evidence="1" type="primary">gpsA</name>
    <name type="ordered locus">Lm4b_01953</name>
</gene>
<protein>
    <recommendedName>
        <fullName evidence="1">Glycerol-3-phosphate dehydrogenase [NAD(P)+]</fullName>
        <ecNumber evidence="1">1.1.1.94</ecNumber>
    </recommendedName>
    <alternativeName>
        <fullName evidence="1">NAD(P)(+)-dependent glycerol-3-phosphate dehydrogenase</fullName>
    </alternativeName>
    <alternativeName>
        <fullName evidence="1">NAD(P)H-dependent dihydroxyacetone-phosphate reductase</fullName>
    </alternativeName>
</protein>
<sequence>MTQKKVAILGAGSWGTGLALVLADNNHQPVIWGNLDKIVNEINESHTNSHYLPDIILPTEVKATLSLDEAIDGAEIVVIAIPTNAMRIVCKQLNEALKEPTILVHVSKGIEPETNLRMSEVIEDEIDASKRKALVVLSGPSHAEEVALRHPTTLCASCKDLSAAEIVQDRFINNNLRIYTNDDVIGAEIGGALKNIIALGAGISDGLGYGDNAKAALMTRGMAEITRLGVAVGSNPQTFYGLTGIGDLIVTCTSVHSRNWRAGNMLGKGENLDEVLEKMGMVVEGVRTAKAVHGWAKKLDIDMPITESIYAILFENKDAREAVDLLMGREKKIEKESF</sequence>
<name>GPDA_LISMC</name>
<dbReference type="EC" id="1.1.1.94" evidence="1"/>
<dbReference type="EMBL" id="FM242711">
    <property type="protein sequence ID" value="CAS05711.1"/>
    <property type="molecule type" value="Genomic_DNA"/>
</dbReference>
<dbReference type="RefSeq" id="WP_003726833.1">
    <property type="nucleotide sequence ID" value="NC_012488.1"/>
</dbReference>
<dbReference type="SMR" id="C1KWN6"/>
<dbReference type="KEGG" id="lmc:Lm4b_01953"/>
<dbReference type="HOGENOM" id="CLU_033449_0_2_9"/>
<dbReference type="UniPathway" id="UPA00940"/>
<dbReference type="GO" id="GO:0005829">
    <property type="term" value="C:cytosol"/>
    <property type="evidence" value="ECO:0007669"/>
    <property type="project" value="TreeGrafter"/>
</dbReference>
<dbReference type="GO" id="GO:0047952">
    <property type="term" value="F:glycerol-3-phosphate dehydrogenase [NAD(P)+] activity"/>
    <property type="evidence" value="ECO:0007669"/>
    <property type="project" value="UniProtKB-UniRule"/>
</dbReference>
<dbReference type="GO" id="GO:0051287">
    <property type="term" value="F:NAD binding"/>
    <property type="evidence" value="ECO:0007669"/>
    <property type="project" value="InterPro"/>
</dbReference>
<dbReference type="GO" id="GO:0005975">
    <property type="term" value="P:carbohydrate metabolic process"/>
    <property type="evidence" value="ECO:0007669"/>
    <property type="project" value="InterPro"/>
</dbReference>
<dbReference type="GO" id="GO:0046167">
    <property type="term" value="P:glycerol-3-phosphate biosynthetic process"/>
    <property type="evidence" value="ECO:0007669"/>
    <property type="project" value="UniProtKB-UniRule"/>
</dbReference>
<dbReference type="GO" id="GO:0046168">
    <property type="term" value="P:glycerol-3-phosphate catabolic process"/>
    <property type="evidence" value="ECO:0007669"/>
    <property type="project" value="InterPro"/>
</dbReference>
<dbReference type="GO" id="GO:0006650">
    <property type="term" value="P:glycerophospholipid metabolic process"/>
    <property type="evidence" value="ECO:0007669"/>
    <property type="project" value="UniProtKB-UniRule"/>
</dbReference>
<dbReference type="GO" id="GO:0008654">
    <property type="term" value="P:phospholipid biosynthetic process"/>
    <property type="evidence" value="ECO:0007669"/>
    <property type="project" value="UniProtKB-KW"/>
</dbReference>
<dbReference type="FunFam" id="1.10.1040.10:FF:000001">
    <property type="entry name" value="Glycerol-3-phosphate dehydrogenase [NAD(P)+]"/>
    <property type="match status" value="1"/>
</dbReference>
<dbReference type="FunFam" id="3.40.50.720:FF:000019">
    <property type="entry name" value="Glycerol-3-phosphate dehydrogenase [NAD(P)+]"/>
    <property type="match status" value="1"/>
</dbReference>
<dbReference type="Gene3D" id="1.10.1040.10">
    <property type="entry name" value="N-(1-d-carboxylethyl)-l-norvaline Dehydrogenase, domain 2"/>
    <property type="match status" value="1"/>
</dbReference>
<dbReference type="Gene3D" id="3.40.50.720">
    <property type="entry name" value="NAD(P)-binding Rossmann-like Domain"/>
    <property type="match status" value="1"/>
</dbReference>
<dbReference type="HAMAP" id="MF_00394">
    <property type="entry name" value="NAD_Glyc3P_dehydrog"/>
    <property type="match status" value="1"/>
</dbReference>
<dbReference type="InterPro" id="IPR008927">
    <property type="entry name" value="6-PGluconate_DH-like_C_sf"/>
</dbReference>
<dbReference type="InterPro" id="IPR013328">
    <property type="entry name" value="6PGD_dom2"/>
</dbReference>
<dbReference type="InterPro" id="IPR006168">
    <property type="entry name" value="G3P_DH_NAD-dep"/>
</dbReference>
<dbReference type="InterPro" id="IPR006109">
    <property type="entry name" value="G3P_DH_NAD-dep_C"/>
</dbReference>
<dbReference type="InterPro" id="IPR011128">
    <property type="entry name" value="G3P_DH_NAD-dep_N"/>
</dbReference>
<dbReference type="InterPro" id="IPR036291">
    <property type="entry name" value="NAD(P)-bd_dom_sf"/>
</dbReference>
<dbReference type="NCBIfam" id="NF000940">
    <property type="entry name" value="PRK00094.1-2"/>
    <property type="match status" value="1"/>
</dbReference>
<dbReference type="NCBIfam" id="NF000941">
    <property type="entry name" value="PRK00094.1-3"/>
    <property type="match status" value="1"/>
</dbReference>
<dbReference type="NCBIfam" id="NF000942">
    <property type="entry name" value="PRK00094.1-4"/>
    <property type="match status" value="1"/>
</dbReference>
<dbReference type="PANTHER" id="PTHR11728">
    <property type="entry name" value="GLYCEROL-3-PHOSPHATE DEHYDROGENASE"/>
    <property type="match status" value="1"/>
</dbReference>
<dbReference type="PANTHER" id="PTHR11728:SF1">
    <property type="entry name" value="GLYCEROL-3-PHOSPHATE DEHYDROGENASE [NAD(+)] 2, CHLOROPLASTIC"/>
    <property type="match status" value="1"/>
</dbReference>
<dbReference type="Pfam" id="PF07479">
    <property type="entry name" value="NAD_Gly3P_dh_C"/>
    <property type="match status" value="1"/>
</dbReference>
<dbReference type="Pfam" id="PF01210">
    <property type="entry name" value="NAD_Gly3P_dh_N"/>
    <property type="match status" value="1"/>
</dbReference>
<dbReference type="PIRSF" id="PIRSF000114">
    <property type="entry name" value="Glycerol-3-P_dh"/>
    <property type="match status" value="1"/>
</dbReference>
<dbReference type="PRINTS" id="PR00077">
    <property type="entry name" value="GPDHDRGNASE"/>
</dbReference>
<dbReference type="SUPFAM" id="SSF48179">
    <property type="entry name" value="6-phosphogluconate dehydrogenase C-terminal domain-like"/>
    <property type="match status" value="1"/>
</dbReference>
<dbReference type="SUPFAM" id="SSF51735">
    <property type="entry name" value="NAD(P)-binding Rossmann-fold domains"/>
    <property type="match status" value="1"/>
</dbReference>
<dbReference type="PROSITE" id="PS00957">
    <property type="entry name" value="NAD_G3PDH"/>
    <property type="match status" value="1"/>
</dbReference>
<keyword id="KW-0963">Cytoplasm</keyword>
<keyword id="KW-0444">Lipid biosynthesis</keyword>
<keyword id="KW-0443">Lipid metabolism</keyword>
<keyword id="KW-0520">NAD</keyword>
<keyword id="KW-0521">NADP</keyword>
<keyword id="KW-0547">Nucleotide-binding</keyword>
<keyword id="KW-0560">Oxidoreductase</keyword>
<keyword id="KW-0594">Phospholipid biosynthesis</keyword>
<keyword id="KW-1208">Phospholipid metabolism</keyword>
<comment type="function">
    <text evidence="1">Catalyzes the reduction of the glycolytic intermediate dihydroxyacetone phosphate (DHAP) to sn-glycerol 3-phosphate (G3P), the key precursor for phospholipid synthesis.</text>
</comment>
<comment type="catalytic activity">
    <reaction evidence="1">
        <text>sn-glycerol 3-phosphate + NAD(+) = dihydroxyacetone phosphate + NADH + H(+)</text>
        <dbReference type="Rhea" id="RHEA:11092"/>
        <dbReference type="ChEBI" id="CHEBI:15378"/>
        <dbReference type="ChEBI" id="CHEBI:57540"/>
        <dbReference type="ChEBI" id="CHEBI:57597"/>
        <dbReference type="ChEBI" id="CHEBI:57642"/>
        <dbReference type="ChEBI" id="CHEBI:57945"/>
        <dbReference type="EC" id="1.1.1.94"/>
    </reaction>
    <physiologicalReaction direction="right-to-left" evidence="1">
        <dbReference type="Rhea" id="RHEA:11094"/>
    </physiologicalReaction>
</comment>
<comment type="catalytic activity">
    <reaction evidence="1">
        <text>sn-glycerol 3-phosphate + NADP(+) = dihydroxyacetone phosphate + NADPH + H(+)</text>
        <dbReference type="Rhea" id="RHEA:11096"/>
        <dbReference type="ChEBI" id="CHEBI:15378"/>
        <dbReference type="ChEBI" id="CHEBI:57597"/>
        <dbReference type="ChEBI" id="CHEBI:57642"/>
        <dbReference type="ChEBI" id="CHEBI:57783"/>
        <dbReference type="ChEBI" id="CHEBI:58349"/>
        <dbReference type="EC" id="1.1.1.94"/>
    </reaction>
    <physiologicalReaction direction="right-to-left" evidence="1">
        <dbReference type="Rhea" id="RHEA:11098"/>
    </physiologicalReaction>
</comment>
<comment type="pathway">
    <text evidence="1">Membrane lipid metabolism; glycerophospholipid metabolism.</text>
</comment>
<comment type="subcellular location">
    <subcellularLocation>
        <location evidence="1">Cytoplasm</location>
    </subcellularLocation>
</comment>
<comment type="similarity">
    <text evidence="1">Belongs to the NAD-dependent glycerol-3-phosphate dehydrogenase family.</text>
</comment>
<proteinExistence type="inferred from homology"/>